<keyword id="KW-0150">Chloroplast</keyword>
<keyword id="KW-0472">Membrane</keyword>
<keyword id="KW-0602">Photosynthesis</keyword>
<keyword id="KW-0604">Photosystem II</keyword>
<keyword id="KW-0934">Plastid</keyword>
<keyword id="KW-0674">Reaction center</keyword>
<keyword id="KW-0793">Thylakoid</keyword>
<keyword id="KW-0812">Transmembrane</keyword>
<keyword id="KW-1133">Transmembrane helix</keyword>
<reference key="1">
    <citation type="submission" date="2006-01" db="EMBL/GenBank/DDBJ databases">
        <title>A comparison of the first two published chloroplast genomes in Asteraceae: Lactuca and Helianthus.</title>
        <authorList>
            <person name="Timme R.E."/>
            <person name="Kuehl J.V."/>
            <person name="Boore J.L."/>
            <person name="Jansen R.K."/>
        </authorList>
    </citation>
    <scope>NUCLEOTIDE SEQUENCE [LARGE SCALE GENOMIC DNA]</scope>
    <source>
        <strain>cv. HA383</strain>
    </source>
</reference>
<accession>Q1KXX3</accession>
<evidence type="ECO:0000255" key="1">
    <source>
        <dbReference type="HAMAP-Rule" id="MF_00438"/>
    </source>
</evidence>
<proteinExistence type="inferred from homology"/>
<protein>
    <recommendedName>
        <fullName evidence="1">Photosystem II reaction center protein M</fullName>
        <shortName evidence="1">PSII-M</shortName>
    </recommendedName>
</protein>
<name>PSBM_HELAN</name>
<dbReference type="EMBL" id="DQ383815">
    <property type="protein sequence ID" value="ABD47132.1"/>
    <property type="molecule type" value="Genomic_DNA"/>
</dbReference>
<dbReference type="RefSeq" id="YP_588103.1">
    <property type="nucleotide sequence ID" value="NC_007977.1"/>
</dbReference>
<dbReference type="SMR" id="Q1KXX3"/>
<dbReference type="GeneID" id="4055647"/>
<dbReference type="KEGG" id="han:4055647"/>
<dbReference type="OrthoDB" id="564131at2759"/>
<dbReference type="GO" id="GO:0009535">
    <property type="term" value="C:chloroplast thylakoid membrane"/>
    <property type="evidence" value="ECO:0007669"/>
    <property type="project" value="UniProtKB-SubCell"/>
</dbReference>
<dbReference type="GO" id="GO:0009523">
    <property type="term" value="C:photosystem II"/>
    <property type="evidence" value="ECO:0007669"/>
    <property type="project" value="UniProtKB-KW"/>
</dbReference>
<dbReference type="GO" id="GO:0019684">
    <property type="term" value="P:photosynthesis, light reaction"/>
    <property type="evidence" value="ECO:0007669"/>
    <property type="project" value="InterPro"/>
</dbReference>
<dbReference type="HAMAP" id="MF_00438">
    <property type="entry name" value="PSII_PsbM"/>
    <property type="match status" value="1"/>
</dbReference>
<dbReference type="InterPro" id="IPR007826">
    <property type="entry name" value="PSII_PsbM"/>
</dbReference>
<dbReference type="InterPro" id="IPR037269">
    <property type="entry name" value="PSII_PsbM_sf"/>
</dbReference>
<dbReference type="NCBIfam" id="TIGR03038">
    <property type="entry name" value="PS_II_psbM"/>
    <property type="match status" value="1"/>
</dbReference>
<dbReference type="PANTHER" id="PTHR35774">
    <property type="entry name" value="PHOTOSYSTEM II REACTION CENTER PROTEIN M"/>
    <property type="match status" value="1"/>
</dbReference>
<dbReference type="PANTHER" id="PTHR35774:SF1">
    <property type="entry name" value="PHOTOSYSTEM II REACTION CENTER PROTEIN M"/>
    <property type="match status" value="1"/>
</dbReference>
<dbReference type="Pfam" id="PF05151">
    <property type="entry name" value="PsbM"/>
    <property type="match status" value="1"/>
</dbReference>
<dbReference type="SUPFAM" id="SSF161033">
    <property type="entry name" value="Photosystem II reaction center protein M, PsbM"/>
    <property type="match status" value="1"/>
</dbReference>
<gene>
    <name evidence="1" type="primary">psbM</name>
</gene>
<geneLocation type="chloroplast"/>
<feature type="chain" id="PRO_0000276242" description="Photosystem II reaction center protein M">
    <location>
        <begin position="1"/>
        <end position="34"/>
    </location>
</feature>
<feature type="transmembrane region" description="Helical" evidence="1">
    <location>
        <begin position="5"/>
        <end position="25"/>
    </location>
</feature>
<comment type="function">
    <text evidence="1">One of the components of the core complex of photosystem II (PSII). PSII is a light-driven water:plastoquinone oxidoreductase that uses light energy to abstract electrons from H(2)O, generating O(2) and a proton gradient subsequently used for ATP formation. It consists of a core antenna complex that captures photons, and an electron transfer chain that converts photonic excitation into a charge separation. This subunit is found at the monomer-monomer interface.</text>
</comment>
<comment type="subunit">
    <text evidence="1">PSII is composed of 1 copy each of membrane proteins PsbA, PsbB, PsbC, PsbD, PsbE, PsbF, PsbH, PsbI, PsbJ, PsbK, PsbL, PsbM, PsbT, PsbX, PsbY, PsbZ, Psb30/Ycf12, at least 3 peripheral proteins of the oxygen-evolving complex and a large number of cofactors. It forms dimeric complexes.</text>
</comment>
<comment type="subcellular location">
    <subcellularLocation>
        <location evidence="1">Plastid</location>
        <location evidence="1">Chloroplast thylakoid membrane</location>
        <topology evidence="1">Single-pass membrane protein</topology>
    </subcellularLocation>
</comment>
<comment type="similarity">
    <text evidence="1">Belongs to the PsbM family.</text>
</comment>
<sequence length="34" mass="3783">MEVNILAFIATALFILVPTAFLLIIYVKTVSQND</sequence>
<organism>
    <name type="scientific">Helianthus annuus</name>
    <name type="common">Common sunflower</name>
    <dbReference type="NCBI Taxonomy" id="4232"/>
    <lineage>
        <taxon>Eukaryota</taxon>
        <taxon>Viridiplantae</taxon>
        <taxon>Streptophyta</taxon>
        <taxon>Embryophyta</taxon>
        <taxon>Tracheophyta</taxon>
        <taxon>Spermatophyta</taxon>
        <taxon>Magnoliopsida</taxon>
        <taxon>eudicotyledons</taxon>
        <taxon>Gunneridae</taxon>
        <taxon>Pentapetalae</taxon>
        <taxon>asterids</taxon>
        <taxon>campanulids</taxon>
        <taxon>Asterales</taxon>
        <taxon>Asteraceae</taxon>
        <taxon>Asteroideae</taxon>
        <taxon>Heliantheae alliance</taxon>
        <taxon>Heliantheae</taxon>
        <taxon>Helianthus</taxon>
    </lineage>
</organism>